<feature type="chain" id="PRO_0000337379" description="Elongation factor Tu">
    <location>
        <begin position="1"/>
        <end position="394"/>
    </location>
</feature>
<feature type="domain" description="tr-type G">
    <location>
        <begin position="10"/>
        <end position="204"/>
    </location>
</feature>
<feature type="region of interest" description="G1" evidence="1">
    <location>
        <begin position="19"/>
        <end position="26"/>
    </location>
</feature>
<feature type="region of interest" description="G2" evidence="1">
    <location>
        <begin position="60"/>
        <end position="64"/>
    </location>
</feature>
<feature type="region of interest" description="G3" evidence="1">
    <location>
        <begin position="81"/>
        <end position="84"/>
    </location>
</feature>
<feature type="region of interest" description="G4" evidence="1">
    <location>
        <begin position="136"/>
        <end position="139"/>
    </location>
</feature>
<feature type="region of interest" description="G5" evidence="1">
    <location>
        <begin position="174"/>
        <end position="176"/>
    </location>
</feature>
<feature type="binding site" evidence="2">
    <location>
        <begin position="19"/>
        <end position="26"/>
    </location>
    <ligand>
        <name>GTP</name>
        <dbReference type="ChEBI" id="CHEBI:37565"/>
    </ligand>
</feature>
<feature type="binding site" evidence="2">
    <location>
        <position position="26"/>
    </location>
    <ligand>
        <name>Mg(2+)</name>
        <dbReference type="ChEBI" id="CHEBI:18420"/>
    </ligand>
</feature>
<feature type="binding site" evidence="2">
    <location>
        <begin position="81"/>
        <end position="85"/>
    </location>
    <ligand>
        <name>GTP</name>
        <dbReference type="ChEBI" id="CHEBI:37565"/>
    </ligand>
</feature>
<feature type="binding site" evidence="2">
    <location>
        <begin position="136"/>
        <end position="139"/>
    </location>
    <ligand>
        <name>GTP</name>
        <dbReference type="ChEBI" id="CHEBI:37565"/>
    </ligand>
</feature>
<reference key="1">
    <citation type="journal article" date="2010" name="PLoS ONE">
        <title>Genome sequence of Cronobacter sakazakii BAA-894 and comparative genomic hybridization analysis with other Cronobacter species.</title>
        <authorList>
            <person name="Kucerova E."/>
            <person name="Clifton S.W."/>
            <person name="Xia X.Q."/>
            <person name="Long F."/>
            <person name="Porwollik S."/>
            <person name="Fulton L."/>
            <person name="Fronick C."/>
            <person name="Minx P."/>
            <person name="Kyung K."/>
            <person name="Warren W."/>
            <person name="Fulton R."/>
            <person name="Feng D."/>
            <person name="Wollam A."/>
            <person name="Shah N."/>
            <person name="Bhonagiri V."/>
            <person name="Nash W.E."/>
            <person name="Hallsworth-Pepin K."/>
            <person name="Wilson R.K."/>
            <person name="McClelland M."/>
            <person name="Forsythe S.J."/>
        </authorList>
    </citation>
    <scope>NUCLEOTIDE SEQUENCE [LARGE SCALE GENOMIC DNA]</scope>
    <source>
        <strain>ATCC BAA-894</strain>
    </source>
</reference>
<name>EFTU_CROS8</name>
<evidence type="ECO:0000250" key="1"/>
<evidence type="ECO:0000255" key="2">
    <source>
        <dbReference type="HAMAP-Rule" id="MF_00118"/>
    </source>
</evidence>
<sequence>MSKEKFERTKPHVNVGTIGHVDHGKTTLTAAITTVLAKTYGGSARAFDQIDNAPEEKARGITINTSHVEYDTPTRHYAHVDCPGHADYVKNMITGAAQMDGAILVVAATDGPMPQTREHILLGRQVGVPYIIVFLNKCDMVDDEELLELVEMEVRELLSQYDFPGDDTPIVRGSALKALEGDAEWEAKIIELAGHLDSYIPEPERAIDKPFLLPIEDVFSISGRGTVVTGRVERGIIKVGEEVEIVGIKDTAKSTCTGVEMFRKLLDEGRAGENVGVLLRGIKREEIERGQVLAKPGSIKPHTKFESEVYILSKDEGGRHTPFFKGYRPQFYFRTTDVTGTIELPEGVEMVMPGDNIKMVVTLIHPIAMDDGLRFAIREGGRTVGAGVVAKVLG</sequence>
<accession>A7MKI5</accession>
<protein>
    <recommendedName>
        <fullName evidence="2">Elongation factor Tu</fullName>
        <shortName evidence="2">EF-Tu</shortName>
        <ecNumber evidence="2">3.6.5.3</ecNumber>
    </recommendedName>
</protein>
<organism>
    <name type="scientific">Cronobacter sakazakii (strain ATCC BAA-894)</name>
    <name type="common">Enterobacter sakazakii</name>
    <dbReference type="NCBI Taxonomy" id="290339"/>
    <lineage>
        <taxon>Bacteria</taxon>
        <taxon>Pseudomonadati</taxon>
        <taxon>Pseudomonadota</taxon>
        <taxon>Gammaproteobacteria</taxon>
        <taxon>Enterobacterales</taxon>
        <taxon>Enterobacteriaceae</taxon>
        <taxon>Cronobacter</taxon>
    </lineage>
</organism>
<keyword id="KW-0963">Cytoplasm</keyword>
<keyword id="KW-0251">Elongation factor</keyword>
<keyword id="KW-0342">GTP-binding</keyword>
<keyword id="KW-0378">Hydrolase</keyword>
<keyword id="KW-0460">Magnesium</keyword>
<keyword id="KW-0479">Metal-binding</keyword>
<keyword id="KW-0547">Nucleotide-binding</keyword>
<keyword id="KW-0648">Protein biosynthesis</keyword>
<keyword id="KW-1185">Reference proteome</keyword>
<comment type="function">
    <text evidence="2">GTP hydrolase that promotes the GTP-dependent binding of aminoacyl-tRNA to the A-site of ribosomes during protein biosynthesis.</text>
</comment>
<comment type="catalytic activity">
    <reaction evidence="2">
        <text>GTP + H2O = GDP + phosphate + H(+)</text>
        <dbReference type="Rhea" id="RHEA:19669"/>
        <dbReference type="ChEBI" id="CHEBI:15377"/>
        <dbReference type="ChEBI" id="CHEBI:15378"/>
        <dbReference type="ChEBI" id="CHEBI:37565"/>
        <dbReference type="ChEBI" id="CHEBI:43474"/>
        <dbReference type="ChEBI" id="CHEBI:58189"/>
        <dbReference type="EC" id="3.6.5.3"/>
    </reaction>
    <physiologicalReaction direction="left-to-right" evidence="2">
        <dbReference type="Rhea" id="RHEA:19670"/>
    </physiologicalReaction>
</comment>
<comment type="subunit">
    <text evidence="2">Monomer.</text>
</comment>
<comment type="subcellular location">
    <subcellularLocation>
        <location evidence="2">Cytoplasm</location>
    </subcellularLocation>
</comment>
<comment type="similarity">
    <text evidence="2">Belongs to the TRAFAC class translation factor GTPase superfamily. Classic translation factor GTPase family. EF-Tu/EF-1A subfamily.</text>
</comment>
<proteinExistence type="inferred from homology"/>
<gene>
    <name evidence="2" type="primary">tuf1</name>
    <name type="ordered locus">ESA_03699</name>
</gene>
<gene>
    <name evidence="2" type="primary">tuf2</name>
    <name type="ordered locus">ESA_04403</name>
</gene>
<dbReference type="EC" id="3.6.5.3" evidence="2"/>
<dbReference type="EMBL" id="CP000783">
    <property type="protein sequence ID" value="ABU78903.1"/>
    <property type="molecule type" value="Genomic_DNA"/>
</dbReference>
<dbReference type="EMBL" id="CP000783">
    <property type="protein sequence ID" value="ABU79582.1"/>
    <property type="molecule type" value="Genomic_DNA"/>
</dbReference>
<dbReference type="BMRB" id="A7MKI5"/>
<dbReference type="SMR" id="A7MKI5"/>
<dbReference type="KEGG" id="esa:ESA_03699"/>
<dbReference type="KEGG" id="esa:ESA_04403"/>
<dbReference type="HOGENOM" id="CLU_007265_0_0_6"/>
<dbReference type="Proteomes" id="UP000000260">
    <property type="component" value="Chromosome"/>
</dbReference>
<dbReference type="GO" id="GO:0005829">
    <property type="term" value="C:cytosol"/>
    <property type="evidence" value="ECO:0007669"/>
    <property type="project" value="TreeGrafter"/>
</dbReference>
<dbReference type="GO" id="GO:0005525">
    <property type="term" value="F:GTP binding"/>
    <property type="evidence" value="ECO:0007669"/>
    <property type="project" value="UniProtKB-UniRule"/>
</dbReference>
<dbReference type="GO" id="GO:0003924">
    <property type="term" value="F:GTPase activity"/>
    <property type="evidence" value="ECO:0007669"/>
    <property type="project" value="InterPro"/>
</dbReference>
<dbReference type="GO" id="GO:0097216">
    <property type="term" value="F:guanosine tetraphosphate binding"/>
    <property type="evidence" value="ECO:0007669"/>
    <property type="project" value="UniProtKB-ARBA"/>
</dbReference>
<dbReference type="GO" id="GO:0003746">
    <property type="term" value="F:translation elongation factor activity"/>
    <property type="evidence" value="ECO:0007669"/>
    <property type="project" value="UniProtKB-UniRule"/>
</dbReference>
<dbReference type="CDD" id="cd01884">
    <property type="entry name" value="EF_Tu"/>
    <property type="match status" value="1"/>
</dbReference>
<dbReference type="CDD" id="cd03697">
    <property type="entry name" value="EFTU_II"/>
    <property type="match status" value="1"/>
</dbReference>
<dbReference type="CDD" id="cd03707">
    <property type="entry name" value="EFTU_III"/>
    <property type="match status" value="1"/>
</dbReference>
<dbReference type="FunFam" id="2.40.30.10:FF:000001">
    <property type="entry name" value="Elongation factor Tu"/>
    <property type="match status" value="1"/>
</dbReference>
<dbReference type="FunFam" id="3.40.50.300:FF:000003">
    <property type="entry name" value="Elongation factor Tu"/>
    <property type="match status" value="1"/>
</dbReference>
<dbReference type="Gene3D" id="3.40.50.300">
    <property type="entry name" value="P-loop containing nucleotide triphosphate hydrolases"/>
    <property type="match status" value="1"/>
</dbReference>
<dbReference type="Gene3D" id="2.40.30.10">
    <property type="entry name" value="Translation factors"/>
    <property type="match status" value="2"/>
</dbReference>
<dbReference type="HAMAP" id="MF_00118_B">
    <property type="entry name" value="EF_Tu_B"/>
    <property type="match status" value="1"/>
</dbReference>
<dbReference type="InterPro" id="IPR041709">
    <property type="entry name" value="EF-Tu_GTP-bd"/>
</dbReference>
<dbReference type="InterPro" id="IPR050055">
    <property type="entry name" value="EF-Tu_GTPase"/>
</dbReference>
<dbReference type="InterPro" id="IPR004161">
    <property type="entry name" value="EFTu-like_2"/>
</dbReference>
<dbReference type="InterPro" id="IPR033720">
    <property type="entry name" value="EFTU_2"/>
</dbReference>
<dbReference type="InterPro" id="IPR031157">
    <property type="entry name" value="G_TR_CS"/>
</dbReference>
<dbReference type="InterPro" id="IPR027417">
    <property type="entry name" value="P-loop_NTPase"/>
</dbReference>
<dbReference type="InterPro" id="IPR005225">
    <property type="entry name" value="Small_GTP-bd"/>
</dbReference>
<dbReference type="InterPro" id="IPR000795">
    <property type="entry name" value="T_Tr_GTP-bd_dom"/>
</dbReference>
<dbReference type="InterPro" id="IPR009000">
    <property type="entry name" value="Transl_B-barrel_sf"/>
</dbReference>
<dbReference type="InterPro" id="IPR009001">
    <property type="entry name" value="Transl_elong_EF1A/Init_IF2_C"/>
</dbReference>
<dbReference type="InterPro" id="IPR004541">
    <property type="entry name" value="Transl_elong_EFTu/EF1A_bac/org"/>
</dbReference>
<dbReference type="InterPro" id="IPR004160">
    <property type="entry name" value="Transl_elong_EFTu/EF1A_C"/>
</dbReference>
<dbReference type="NCBIfam" id="TIGR00485">
    <property type="entry name" value="EF-Tu"/>
    <property type="match status" value="1"/>
</dbReference>
<dbReference type="NCBIfam" id="NF000766">
    <property type="entry name" value="PRK00049.1"/>
    <property type="match status" value="1"/>
</dbReference>
<dbReference type="NCBIfam" id="NF009372">
    <property type="entry name" value="PRK12735.1"/>
    <property type="match status" value="1"/>
</dbReference>
<dbReference type="NCBIfam" id="NF009373">
    <property type="entry name" value="PRK12736.1"/>
    <property type="match status" value="1"/>
</dbReference>
<dbReference type="NCBIfam" id="TIGR00231">
    <property type="entry name" value="small_GTP"/>
    <property type="match status" value="1"/>
</dbReference>
<dbReference type="PANTHER" id="PTHR43721:SF22">
    <property type="entry name" value="ELONGATION FACTOR TU, MITOCHONDRIAL"/>
    <property type="match status" value="1"/>
</dbReference>
<dbReference type="PANTHER" id="PTHR43721">
    <property type="entry name" value="ELONGATION FACTOR TU-RELATED"/>
    <property type="match status" value="1"/>
</dbReference>
<dbReference type="Pfam" id="PF00009">
    <property type="entry name" value="GTP_EFTU"/>
    <property type="match status" value="1"/>
</dbReference>
<dbReference type="Pfam" id="PF03144">
    <property type="entry name" value="GTP_EFTU_D2"/>
    <property type="match status" value="1"/>
</dbReference>
<dbReference type="Pfam" id="PF03143">
    <property type="entry name" value="GTP_EFTU_D3"/>
    <property type="match status" value="1"/>
</dbReference>
<dbReference type="PRINTS" id="PR00315">
    <property type="entry name" value="ELONGATNFCT"/>
</dbReference>
<dbReference type="SUPFAM" id="SSF50465">
    <property type="entry name" value="EF-Tu/eEF-1alpha/eIF2-gamma C-terminal domain"/>
    <property type="match status" value="1"/>
</dbReference>
<dbReference type="SUPFAM" id="SSF52540">
    <property type="entry name" value="P-loop containing nucleoside triphosphate hydrolases"/>
    <property type="match status" value="1"/>
</dbReference>
<dbReference type="SUPFAM" id="SSF50447">
    <property type="entry name" value="Translation proteins"/>
    <property type="match status" value="1"/>
</dbReference>
<dbReference type="PROSITE" id="PS00301">
    <property type="entry name" value="G_TR_1"/>
    <property type="match status" value="1"/>
</dbReference>
<dbReference type="PROSITE" id="PS51722">
    <property type="entry name" value="G_TR_2"/>
    <property type="match status" value="1"/>
</dbReference>